<feature type="chain" id="PRO_1000001033" description="Dihydroxy-acid dehydratase">
    <location>
        <begin position="1"/>
        <end position="612"/>
    </location>
</feature>
<feature type="active site" description="Proton acceptor" evidence="1">
    <location>
        <position position="515"/>
    </location>
</feature>
<feature type="binding site" evidence="1">
    <location>
        <position position="81"/>
    </location>
    <ligand>
        <name>Mg(2+)</name>
        <dbReference type="ChEBI" id="CHEBI:18420"/>
    </ligand>
</feature>
<feature type="binding site" evidence="1">
    <location>
        <position position="122"/>
    </location>
    <ligand>
        <name>[2Fe-2S] cluster</name>
        <dbReference type="ChEBI" id="CHEBI:190135"/>
    </ligand>
</feature>
<feature type="binding site" evidence="1">
    <location>
        <position position="123"/>
    </location>
    <ligand>
        <name>Mg(2+)</name>
        <dbReference type="ChEBI" id="CHEBI:18420"/>
    </ligand>
</feature>
<feature type="binding site" description="via carbamate group" evidence="1">
    <location>
        <position position="124"/>
    </location>
    <ligand>
        <name>Mg(2+)</name>
        <dbReference type="ChEBI" id="CHEBI:18420"/>
    </ligand>
</feature>
<feature type="binding site" evidence="1">
    <location>
        <position position="193"/>
    </location>
    <ligand>
        <name>[2Fe-2S] cluster</name>
        <dbReference type="ChEBI" id="CHEBI:190135"/>
    </ligand>
</feature>
<feature type="binding site" evidence="1">
    <location>
        <position position="489"/>
    </location>
    <ligand>
        <name>Mg(2+)</name>
        <dbReference type="ChEBI" id="CHEBI:18420"/>
    </ligand>
</feature>
<feature type="modified residue" description="N6-carboxylysine" evidence="1">
    <location>
        <position position="124"/>
    </location>
</feature>
<gene>
    <name evidence="1" type="primary">ilvD</name>
    <name type="ordered locus">PSPA7_0446</name>
</gene>
<comment type="function">
    <text evidence="1">Functions in the biosynthesis of branched-chain amino acids. Catalyzes the dehydration of (2R,3R)-2,3-dihydroxy-3-methylpentanoate (2,3-dihydroxy-3-methylvalerate) into 2-oxo-3-methylpentanoate (2-oxo-3-methylvalerate) and of (2R)-2,3-dihydroxy-3-methylbutanoate (2,3-dihydroxyisovalerate) into 2-oxo-3-methylbutanoate (2-oxoisovalerate), the penultimate precursor to L-isoleucine and L-valine, respectively.</text>
</comment>
<comment type="catalytic activity">
    <reaction evidence="1">
        <text>(2R)-2,3-dihydroxy-3-methylbutanoate = 3-methyl-2-oxobutanoate + H2O</text>
        <dbReference type="Rhea" id="RHEA:24809"/>
        <dbReference type="ChEBI" id="CHEBI:11851"/>
        <dbReference type="ChEBI" id="CHEBI:15377"/>
        <dbReference type="ChEBI" id="CHEBI:49072"/>
        <dbReference type="EC" id="4.2.1.9"/>
    </reaction>
    <physiologicalReaction direction="left-to-right" evidence="1">
        <dbReference type="Rhea" id="RHEA:24810"/>
    </physiologicalReaction>
</comment>
<comment type="catalytic activity">
    <reaction evidence="1">
        <text>(2R,3R)-2,3-dihydroxy-3-methylpentanoate = (S)-3-methyl-2-oxopentanoate + H2O</text>
        <dbReference type="Rhea" id="RHEA:27694"/>
        <dbReference type="ChEBI" id="CHEBI:15377"/>
        <dbReference type="ChEBI" id="CHEBI:35146"/>
        <dbReference type="ChEBI" id="CHEBI:49258"/>
        <dbReference type="EC" id="4.2.1.9"/>
    </reaction>
    <physiologicalReaction direction="left-to-right" evidence="1">
        <dbReference type="Rhea" id="RHEA:27695"/>
    </physiologicalReaction>
</comment>
<comment type="cofactor">
    <cofactor evidence="1">
        <name>[2Fe-2S] cluster</name>
        <dbReference type="ChEBI" id="CHEBI:190135"/>
    </cofactor>
    <text evidence="1">Binds 1 [2Fe-2S] cluster per subunit. This cluster acts as a Lewis acid cofactor.</text>
</comment>
<comment type="cofactor">
    <cofactor evidence="1">
        <name>Mg(2+)</name>
        <dbReference type="ChEBI" id="CHEBI:18420"/>
    </cofactor>
</comment>
<comment type="pathway">
    <text evidence="1">Amino-acid biosynthesis; L-isoleucine biosynthesis; L-isoleucine from 2-oxobutanoate: step 3/4.</text>
</comment>
<comment type="pathway">
    <text evidence="1">Amino-acid biosynthesis; L-valine biosynthesis; L-valine from pyruvate: step 3/4.</text>
</comment>
<comment type="subunit">
    <text evidence="1">Homodimer.</text>
</comment>
<comment type="similarity">
    <text evidence="1">Belongs to the IlvD/Edd family.</text>
</comment>
<evidence type="ECO:0000255" key="1">
    <source>
        <dbReference type="HAMAP-Rule" id="MF_00012"/>
    </source>
</evidence>
<accession>A6UYF6</accession>
<sequence>MPDYRSKTSTHGRNMAGARALWRATGMKDEDFKKPIIAIANSFTQFVPGHVHLKDLGQLVAREIEKAGGVAKEFNTIAVDDGIAMGHDGMLYSLPSREIIADSVEYMVNAHCADAIVCISNCDKITPGMLMAALRLNIPVVFVSGGPMEAGKTKLASHGLDLVDAMVVAADDSCSDEKVAEYERSACPTCGSCSGMFTANSMNCLTEALGLSLPGNGSTLATHADREQLFLRAGRLAVELCQRYYGEGDDSVLPRNIANFKAFENAMTLDIAMGGSTNTILHLLAAAQEAEVPFDLRDIDRLSRKVPQLCKVAPNIQKYHMEDVHRAGGIFSILGELARGGLLHTDVATVHSPSMADAIARWDITQTRDEAVHTFFKAGPAGIPTQTAFSQNTRWPSLDDDRAEGCIRSVEHAYSKEGGLAVLYGNIALDGCVVKTAGVDESIHVFEGRAKIFESQDAAVKGILGDEVKAGDIVIIRYEGPKGGPGMQEMLYPTSYLKSKGLGKQCALLTDGRFSGGTSGLSIGHASPEAAAGGAIGLVQDGDKVLIDIPNRSINLLVSDEELAARRAEQDRKGWKPAAPRARRVSTALKAYALLATSADKGAVRNKALLDG</sequence>
<dbReference type="EC" id="4.2.1.9" evidence="1"/>
<dbReference type="EMBL" id="CP000744">
    <property type="protein sequence ID" value="ABR86669.1"/>
    <property type="molecule type" value="Genomic_DNA"/>
</dbReference>
<dbReference type="RefSeq" id="WP_012073964.1">
    <property type="nucleotide sequence ID" value="NC_009656.1"/>
</dbReference>
<dbReference type="SMR" id="A6UYF6"/>
<dbReference type="KEGG" id="pap:PSPA7_0446"/>
<dbReference type="HOGENOM" id="CLU_014271_4_2_6"/>
<dbReference type="UniPathway" id="UPA00047">
    <property type="reaction ID" value="UER00057"/>
</dbReference>
<dbReference type="UniPathway" id="UPA00049">
    <property type="reaction ID" value="UER00061"/>
</dbReference>
<dbReference type="Proteomes" id="UP000001582">
    <property type="component" value="Chromosome"/>
</dbReference>
<dbReference type="GO" id="GO:0005829">
    <property type="term" value="C:cytosol"/>
    <property type="evidence" value="ECO:0007669"/>
    <property type="project" value="TreeGrafter"/>
</dbReference>
<dbReference type="GO" id="GO:0051537">
    <property type="term" value="F:2 iron, 2 sulfur cluster binding"/>
    <property type="evidence" value="ECO:0007669"/>
    <property type="project" value="UniProtKB-UniRule"/>
</dbReference>
<dbReference type="GO" id="GO:0004160">
    <property type="term" value="F:dihydroxy-acid dehydratase activity"/>
    <property type="evidence" value="ECO:0007669"/>
    <property type="project" value="UniProtKB-UniRule"/>
</dbReference>
<dbReference type="GO" id="GO:0000287">
    <property type="term" value="F:magnesium ion binding"/>
    <property type="evidence" value="ECO:0007669"/>
    <property type="project" value="UniProtKB-UniRule"/>
</dbReference>
<dbReference type="GO" id="GO:0009097">
    <property type="term" value="P:isoleucine biosynthetic process"/>
    <property type="evidence" value="ECO:0007669"/>
    <property type="project" value="UniProtKB-UniRule"/>
</dbReference>
<dbReference type="GO" id="GO:0009099">
    <property type="term" value="P:L-valine biosynthetic process"/>
    <property type="evidence" value="ECO:0007669"/>
    <property type="project" value="UniProtKB-UniRule"/>
</dbReference>
<dbReference type="FunFam" id="3.50.30.80:FF:000001">
    <property type="entry name" value="Dihydroxy-acid dehydratase"/>
    <property type="match status" value="1"/>
</dbReference>
<dbReference type="Gene3D" id="3.50.30.80">
    <property type="entry name" value="IlvD/EDD C-terminal domain-like"/>
    <property type="match status" value="1"/>
</dbReference>
<dbReference type="HAMAP" id="MF_00012">
    <property type="entry name" value="IlvD"/>
    <property type="match status" value="1"/>
</dbReference>
<dbReference type="InterPro" id="IPR042096">
    <property type="entry name" value="Dihydro-acid_dehy_C"/>
</dbReference>
<dbReference type="InterPro" id="IPR004404">
    <property type="entry name" value="DihydroxyA_deHydtase"/>
</dbReference>
<dbReference type="InterPro" id="IPR020558">
    <property type="entry name" value="DiOHA_6PGluconate_deHydtase_CS"/>
</dbReference>
<dbReference type="InterPro" id="IPR056740">
    <property type="entry name" value="ILV_EDD_C"/>
</dbReference>
<dbReference type="InterPro" id="IPR000581">
    <property type="entry name" value="ILV_EDD_N"/>
</dbReference>
<dbReference type="InterPro" id="IPR037237">
    <property type="entry name" value="IlvD/EDD_N"/>
</dbReference>
<dbReference type="NCBIfam" id="TIGR00110">
    <property type="entry name" value="ilvD"/>
    <property type="match status" value="1"/>
</dbReference>
<dbReference type="NCBIfam" id="NF009103">
    <property type="entry name" value="PRK12448.1"/>
    <property type="match status" value="1"/>
</dbReference>
<dbReference type="PANTHER" id="PTHR43661">
    <property type="entry name" value="D-XYLONATE DEHYDRATASE"/>
    <property type="match status" value="1"/>
</dbReference>
<dbReference type="PANTHER" id="PTHR43661:SF3">
    <property type="entry name" value="D-XYLONATE DEHYDRATASE YAGF-RELATED"/>
    <property type="match status" value="1"/>
</dbReference>
<dbReference type="Pfam" id="PF24877">
    <property type="entry name" value="ILV_EDD_C"/>
    <property type="match status" value="1"/>
</dbReference>
<dbReference type="Pfam" id="PF00920">
    <property type="entry name" value="ILVD_EDD_N"/>
    <property type="match status" value="1"/>
</dbReference>
<dbReference type="SUPFAM" id="SSF143975">
    <property type="entry name" value="IlvD/EDD N-terminal domain-like"/>
    <property type="match status" value="1"/>
</dbReference>
<dbReference type="SUPFAM" id="SSF52016">
    <property type="entry name" value="LeuD/IlvD-like"/>
    <property type="match status" value="1"/>
</dbReference>
<dbReference type="PROSITE" id="PS00886">
    <property type="entry name" value="ILVD_EDD_1"/>
    <property type="match status" value="1"/>
</dbReference>
<dbReference type="PROSITE" id="PS00887">
    <property type="entry name" value="ILVD_EDD_2"/>
    <property type="match status" value="1"/>
</dbReference>
<proteinExistence type="inferred from homology"/>
<keyword id="KW-0001">2Fe-2S</keyword>
<keyword id="KW-0028">Amino-acid biosynthesis</keyword>
<keyword id="KW-0100">Branched-chain amino acid biosynthesis</keyword>
<keyword id="KW-0408">Iron</keyword>
<keyword id="KW-0411">Iron-sulfur</keyword>
<keyword id="KW-0456">Lyase</keyword>
<keyword id="KW-0460">Magnesium</keyword>
<keyword id="KW-0479">Metal-binding</keyword>
<reference key="1">
    <citation type="submission" date="2007-06" db="EMBL/GenBank/DDBJ databases">
        <authorList>
            <person name="Dodson R.J."/>
            <person name="Harkins D."/>
            <person name="Paulsen I.T."/>
        </authorList>
    </citation>
    <scope>NUCLEOTIDE SEQUENCE [LARGE SCALE GENOMIC DNA]</scope>
    <source>
        <strain>DSM 24068 / PA7</strain>
    </source>
</reference>
<protein>
    <recommendedName>
        <fullName evidence="1">Dihydroxy-acid dehydratase</fullName>
        <shortName evidence="1">DAD</shortName>
        <ecNumber evidence="1">4.2.1.9</ecNumber>
    </recommendedName>
</protein>
<name>ILVD_PSEP7</name>
<organism>
    <name type="scientific">Pseudomonas paraeruginosa (strain DSM 24068 / PA7)</name>
    <name type="common">Pseudomonas aeruginosa (strain PA7)</name>
    <dbReference type="NCBI Taxonomy" id="381754"/>
    <lineage>
        <taxon>Bacteria</taxon>
        <taxon>Pseudomonadati</taxon>
        <taxon>Pseudomonadota</taxon>
        <taxon>Gammaproteobacteria</taxon>
        <taxon>Pseudomonadales</taxon>
        <taxon>Pseudomonadaceae</taxon>
        <taxon>Pseudomonas</taxon>
        <taxon>Pseudomonas paraeruginosa</taxon>
    </lineage>
</organism>